<name>DLTA_STAAT</name>
<keyword id="KW-0067">ATP-binding</keyword>
<keyword id="KW-0963">Cytoplasm</keyword>
<keyword id="KW-0436">Ligase</keyword>
<keyword id="KW-0547">Nucleotide-binding</keyword>
<proteinExistence type="inferred from homology"/>
<sequence length="485" mass="54670">MTDIINKLQAFADANPQSIAVRHTTDELTYQQLMDESSKLAHRLQGSKKPMILFGHMSPYMIVGMIGAIKAGCGYVPVDTSIPEDRIKMIINKVQPEFVFNTTDESFESLEGEVFTIEDIKTSQDPVIFDSQIKDNDTVYTIFTSGSTGEPKGVQIEYASLVQFTEWMLELNKSGNEQQWLNQAPFSFDLSVMAIYPCLASGGTLNLVDKNMINKPKLLNEMLTATPINIWVSTPSFMEMCLLLPTLNEEQYGSLNEFFFCGEILPHRAAKALVNRFPSATIYNTYGPTEATVAVTSIQITQEILDQYPTLPVGVERPGARLSTTDEGELVIEGQSVSLGYLKNDQKTAEVFNFDDGIRTYHTGDKAKFENGQWFIQGRIDFQIKLNGYRMELEEIETQLRQSEFVKEAIVVPVYKNDKVIHLIGAIVPTTEVTDNAEMTKNIKNDLKSRLPEYMIPRKFEWMEQLPLTSNGKIDRKKIAEVING</sequence>
<evidence type="ECO:0000255" key="1">
    <source>
        <dbReference type="HAMAP-Rule" id="MF_00593"/>
    </source>
</evidence>
<comment type="function">
    <text evidence="1">Catalyzes the first step in the D-alanylation of lipoteichoic acid (LTA), the activation of D-alanine and its transfer onto the D-alanyl carrier protein (Dcp) DltC. In an ATP-dependent two-step reaction, forms a high energy D-alanyl-AMP intermediate, followed by transfer of the D-alanyl residue as a thiol ester to the phosphopantheinyl prosthetic group of the Dcp. D-alanylation of LTA plays an important role in modulating the properties of the cell wall in Gram-positive bacteria, influencing the net charge of the cell wall.</text>
</comment>
<comment type="catalytic activity">
    <reaction evidence="1">
        <text>holo-[D-alanyl-carrier protein] + D-alanine + ATP = D-alanyl-[D-alanyl-carrier protein] + AMP + diphosphate</text>
        <dbReference type="Rhea" id="RHEA:55132"/>
        <dbReference type="Rhea" id="RHEA-COMP:14102"/>
        <dbReference type="Rhea" id="RHEA-COMP:14103"/>
        <dbReference type="ChEBI" id="CHEBI:30616"/>
        <dbReference type="ChEBI" id="CHEBI:33019"/>
        <dbReference type="ChEBI" id="CHEBI:57416"/>
        <dbReference type="ChEBI" id="CHEBI:64479"/>
        <dbReference type="ChEBI" id="CHEBI:138620"/>
        <dbReference type="ChEBI" id="CHEBI:456215"/>
        <dbReference type="EC" id="6.2.1.54"/>
    </reaction>
</comment>
<comment type="pathway">
    <text evidence="1">Cell wall biogenesis; lipoteichoic acid biosynthesis.</text>
</comment>
<comment type="subcellular location">
    <subcellularLocation>
        <location evidence="1">Cytoplasm</location>
    </subcellularLocation>
</comment>
<comment type="similarity">
    <text evidence="1">Belongs to the ATP-dependent AMP-binding enzyme family. DltA subfamily.</text>
</comment>
<reference key="1">
    <citation type="journal article" date="2007" name="BMC Microbiol.">
        <title>Subtle genetic changes enhance virulence of methicillin resistant and sensitive Staphylococcus aureus.</title>
        <authorList>
            <person name="Highlander S.K."/>
            <person name="Hulten K.G."/>
            <person name="Qin X."/>
            <person name="Jiang H."/>
            <person name="Yerrapragada S."/>
            <person name="Mason E.O. Jr."/>
            <person name="Shang Y."/>
            <person name="Williams T.M."/>
            <person name="Fortunov R.M."/>
            <person name="Liu Y."/>
            <person name="Igboeli O."/>
            <person name="Petrosino J."/>
            <person name="Tirumalai M."/>
            <person name="Uzman A."/>
            <person name="Fox G.E."/>
            <person name="Cardenas A.M."/>
            <person name="Muzny D.M."/>
            <person name="Hemphill L."/>
            <person name="Ding Y."/>
            <person name="Dugan S."/>
            <person name="Blyth P.R."/>
            <person name="Buhay C.J."/>
            <person name="Dinh H.H."/>
            <person name="Hawes A.C."/>
            <person name="Holder M."/>
            <person name="Kovar C.L."/>
            <person name="Lee S.L."/>
            <person name="Liu W."/>
            <person name="Nazareth L.V."/>
            <person name="Wang Q."/>
            <person name="Zhou J."/>
            <person name="Kaplan S.L."/>
            <person name="Weinstock G.M."/>
        </authorList>
    </citation>
    <scope>NUCLEOTIDE SEQUENCE [LARGE SCALE GENOMIC DNA]</scope>
    <source>
        <strain>USA300 / TCH1516</strain>
    </source>
</reference>
<protein>
    <recommendedName>
        <fullName evidence="1">D-alanine--D-alanyl carrier protein ligase</fullName>
        <shortName evidence="1">DCL</shortName>
        <ecNumber evidence="1">6.2.1.54</ecNumber>
    </recommendedName>
    <alternativeName>
        <fullName evidence="1">D-alanine--poly(phosphoribitol) ligase subunit 1</fullName>
    </alternativeName>
    <alternativeName>
        <fullName evidence="1">D-alanine-activating enzyme</fullName>
        <shortName evidence="1">DAE</shortName>
    </alternativeName>
</protein>
<accession>A8Z1J1</accession>
<organism>
    <name type="scientific">Staphylococcus aureus (strain USA300 / TCH1516)</name>
    <dbReference type="NCBI Taxonomy" id="451516"/>
    <lineage>
        <taxon>Bacteria</taxon>
        <taxon>Bacillati</taxon>
        <taxon>Bacillota</taxon>
        <taxon>Bacilli</taxon>
        <taxon>Bacillales</taxon>
        <taxon>Staphylococcaceae</taxon>
        <taxon>Staphylococcus</taxon>
    </lineage>
</organism>
<dbReference type="EC" id="6.2.1.54" evidence="1"/>
<dbReference type="EMBL" id="CP000730">
    <property type="protein sequence ID" value="ABX28914.1"/>
    <property type="molecule type" value="Genomic_DNA"/>
</dbReference>
<dbReference type="RefSeq" id="WP_000129653.1">
    <property type="nucleotide sequence ID" value="NC_010079.1"/>
</dbReference>
<dbReference type="SMR" id="A8Z1J1"/>
<dbReference type="KEGG" id="sax:USA300HOU_0893"/>
<dbReference type="HOGENOM" id="CLU_000022_2_12_9"/>
<dbReference type="UniPathway" id="UPA00556"/>
<dbReference type="GO" id="GO:0005737">
    <property type="term" value="C:cytoplasm"/>
    <property type="evidence" value="ECO:0007669"/>
    <property type="project" value="UniProtKB-SubCell"/>
</dbReference>
<dbReference type="GO" id="GO:0005524">
    <property type="term" value="F:ATP binding"/>
    <property type="evidence" value="ECO:0007669"/>
    <property type="project" value="UniProtKB-KW"/>
</dbReference>
<dbReference type="GO" id="GO:0047473">
    <property type="term" value="F:D-alanine [D-alanyl carrier protein] ligase activity"/>
    <property type="evidence" value="ECO:0007669"/>
    <property type="project" value="UniProtKB-UniRule"/>
</dbReference>
<dbReference type="GO" id="GO:0070395">
    <property type="term" value="P:lipoteichoic acid biosynthetic process"/>
    <property type="evidence" value="ECO:0007669"/>
    <property type="project" value="UniProtKB-UniRule"/>
</dbReference>
<dbReference type="CDD" id="cd05945">
    <property type="entry name" value="DltA"/>
    <property type="match status" value="1"/>
</dbReference>
<dbReference type="FunFam" id="3.30.300.30:FF:000012">
    <property type="entry name" value="D-alanine--D-alanyl carrier protein ligase"/>
    <property type="match status" value="1"/>
</dbReference>
<dbReference type="Gene3D" id="3.30.300.30">
    <property type="match status" value="1"/>
</dbReference>
<dbReference type="Gene3D" id="3.40.50.12780">
    <property type="entry name" value="N-terminal domain of ligase-like"/>
    <property type="match status" value="1"/>
</dbReference>
<dbReference type="HAMAP" id="MF_00593">
    <property type="entry name" value="DltA"/>
    <property type="match status" value="1"/>
</dbReference>
<dbReference type="InterPro" id="IPR010071">
    <property type="entry name" value="AA_adenyl_dom"/>
</dbReference>
<dbReference type="InterPro" id="IPR025110">
    <property type="entry name" value="AMP-bd_C"/>
</dbReference>
<dbReference type="InterPro" id="IPR045851">
    <property type="entry name" value="AMP-bd_C_sf"/>
</dbReference>
<dbReference type="InterPro" id="IPR000873">
    <property type="entry name" value="AMP-dep_synth/lig_dom"/>
</dbReference>
<dbReference type="InterPro" id="IPR042099">
    <property type="entry name" value="ANL_N_sf"/>
</dbReference>
<dbReference type="InterPro" id="IPR010072">
    <property type="entry name" value="DltA"/>
</dbReference>
<dbReference type="InterPro" id="IPR044507">
    <property type="entry name" value="DltA-like"/>
</dbReference>
<dbReference type="NCBIfam" id="TIGR01733">
    <property type="entry name" value="AA-adenyl-dom"/>
    <property type="match status" value="1"/>
</dbReference>
<dbReference type="NCBIfam" id="TIGR01734">
    <property type="entry name" value="D-ala-DACP-lig"/>
    <property type="match status" value="1"/>
</dbReference>
<dbReference type="NCBIfam" id="NF003417">
    <property type="entry name" value="PRK04813.1"/>
    <property type="match status" value="1"/>
</dbReference>
<dbReference type="PANTHER" id="PTHR45398">
    <property type="match status" value="1"/>
</dbReference>
<dbReference type="PANTHER" id="PTHR45398:SF1">
    <property type="entry name" value="ENZYME, PUTATIVE (JCVI)-RELATED"/>
    <property type="match status" value="1"/>
</dbReference>
<dbReference type="Pfam" id="PF00501">
    <property type="entry name" value="AMP-binding"/>
    <property type="match status" value="1"/>
</dbReference>
<dbReference type="Pfam" id="PF13193">
    <property type="entry name" value="AMP-binding_C"/>
    <property type="match status" value="1"/>
</dbReference>
<dbReference type="SUPFAM" id="SSF56801">
    <property type="entry name" value="Acetyl-CoA synthetase-like"/>
    <property type="match status" value="1"/>
</dbReference>
<feature type="chain" id="PRO_1000082425" description="D-alanine--D-alanyl carrier protein ligase">
    <location>
        <begin position="1"/>
        <end position="485"/>
    </location>
</feature>
<feature type="binding site" evidence="1">
    <location>
        <begin position="144"/>
        <end position="145"/>
    </location>
    <ligand>
        <name>ATP</name>
        <dbReference type="ChEBI" id="CHEBI:30616"/>
    </ligand>
</feature>
<feature type="binding site" evidence="1">
    <location>
        <position position="189"/>
    </location>
    <ligand>
        <name>D-alanine</name>
        <dbReference type="ChEBI" id="CHEBI:57416"/>
    </ligand>
</feature>
<feature type="binding site" evidence="1">
    <location>
        <begin position="284"/>
        <end position="289"/>
    </location>
    <ligand>
        <name>ATP</name>
        <dbReference type="ChEBI" id="CHEBI:30616"/>
    </ligand>
</feature>
<feature type="binding site" evidence="1">
    <location>
        <position position="293"/>
    </location>
    <ligand>
        <name>D-alanine</name>
        <dbReference type="ChEBI" id="CHEBI:57416"/>
    </ligand>
</feature>
<feature type="binding site" evidence="1">
    <location>
        <position position="365"/>
    </location>
    <ligand>
        <name>ATP</name>
        <dbReference type="ChEBI" id="CHEBI:30616"/>
    </ligand>
</feature>
<feature type="binding site" evidence="1">
    <location>
        <position position="473"/>
    </location>
    <ligand>
        <name>ATP</name>
        <dbReference type="ChEBI" id="CHEBI:30616"/>
    </ligand>
</feature>
<feature type="binding site" evidence="1">
    <location>
        <position position="473"/>
    </location>
    <ligand>
        <name>D-alanine</name>
        <dbReference type="ChEBI" id="CHEBI:57416"/>
    </ligand>
</feature>
<gene>
    <name evidence="1" type="primary">dltA</name>
    <name type="ordered locus">USA300HOU_0893</name>
</gene>